<keyword id="KW-0963">Cytoplasm</keyword>
<keyword id="KW-0275">Fatty acid biosynthesis</keyword>
<keyword id="KW-0276">Fatty acid metabolism</keyword>
<keyword id="KW-0444">Lipid biosynthesis</keyword>
<keyword id="KW-0443">Lipid metabolism</keyword>
<keyword id="KW-0460">Magnesium</keyword>
<keyword id="KW-0479">Metal-binding</keyword>
<keyword id="KW-0808">Transferase</keyword>
<proteinExistence type="inferred from homology"/>
<reference key="1">
    <citation type="journal article" date="2009" name="Appl. Environ. Microbiol.">
        <title>Three genomes from the phylum Acidobacteria provide insight into the lifestyles of these microorganisms in soils.</title>
        <authorList>
            <person name="Ward N.L."/>
            <person name="Challacombe J.F."/>
            <person name="Janssen P.H."/>
            <person name="Henrissat B."/>
            <person name="Coutinho P.M."/>
            <person name="Wu M."/>
            <person name="Xie G."/>
            <person name="Haft D.H."/>
            <person name="Sait M."/>
            <person name="Badger J."/>
            <person name="Barabote R.D."/>
            <person name="Bradley B."/>
            <person name="Brettin T.S."/>
            <person name="Brinkac L.M."/>
            <person name="Bruce D."/>
            <person name="Creasy T."/>
            <person name="Daugherty S.C."/>
            <person name="Davidsen T.M."/>
            <person name="DeBoy R.T."/>
            <person name="Detter J.C."/>
            <person name="Dodson R.J."/>
            <person name="Durkin A.S."/>
            <person name="Ganapathy A."/>
            <person name="Gwinn-Giglio M."/>
            <person name="Han C.S."/>
            <person name="Khouri H."/>
            <person name="Kiss H."/>
            <person name="Kothari S.P."/>
            <person name="Madupu R."/>
            <person name="Nelson K.E."/>
            <person name="Nelson W.C."/>
            <person name="Paulsen I."/>
            <person name="Penn K."/>
            <person name="Ren Q."/>
            <person name="Rosovitz M.J."/>
            <person name="Selengut J.D."/>
            <person name="Shrivastava S."/>
            <person name="Sullivan S.A."/>
            <person name="Tapia R."/>
            <person name="Thompson L.S."/>
            <person name="Watkins K.L."/>
            <person name="Yang Q."/>
            <person name="Yu C."/>
            <person name="Zafar N."/>
            <person name="Zhou L."/>
            <person name="Kuske C.R."/>
        </authorList>
    </citation>
    <scope>NUCLEOTIDE SEQUENCE [LARGE SCALE GENOMIC DNA]</scope>
    <source>
        <strain>Ellin6076</strain>
    </source>
</reference>
<accession>Q01RT7</accession>
<organism>
    <name type="scientific">Solibacter usitatus (strain Ellin6076)</name>
    <dbReference type="NCBI Taxonomy" id="234267"/>
    <lineage>
        <taxon>Bacteria</taxon>
        <taxon>Pseudomonadati</taxon>
        <taxon>Acidobacteriota</taxon>
        <taxon>Terriglobia</taxon>
        <taxon>Bryobacterales</taxon>
        <taxon>Solibacteraceae</taxon>
        <taxon>Candidatus Solibacter</taxon>
    </lineage>
</organism>
<gene>
    <name evidence="1" type="primary">acpS</name>
    <name type="ordered locus">Acid_6712</name>
</gene>
<sequence>MIVGTGVDLAEVDRIQRSIERYGDKFIKRIYTPGEIAYVERKANKFERYAARFAAKEAGMKAIGTGWRHGVRWQDFEVANLRTGKPTLLLHGVAARYAEKLGVKNIALSITHTAALGMAHVILEN</sequence>
<evidence type="ECO:0000255" key="1">
    <source>
        <dbReference type="HAMAP-Rule" id="MF_00101"/>
    </source>
</evidence>
<name>ACPS_SOLUE</name>
<protein>
    <recommendedName>
        <fullName evidence="1">Holo-[acyl-carrier-protein] synthase</fullName>
        <shortName evidence="1">Holo-ACP synthase</shortName>
        <ecNumber evidence="1">2.7.8.7</ecNumber>
    </recommendedName>
    <alternativeName>
        <fullName evidence="1">4'-phosphopantetheinyl transferase AcpS</fullName>
    </alternativeName>
</protein>
<feature type="chain" id="PRO_1000008504" description="Holo-[acyl-carrier-protein] synthase">
    <location>
        <begin position="1"/>
        <end position="125"/>
    </location>
</feature>
<feature type="binding site" evidence="1">
    <location>
        <position position="8"/>
    </location>
    <ligand>
        <name>Mg(2+)</name>
        <dbReference type="ChEBI" id="CHEBI:18420"/>
    </ligand>
</feature>
<feature type="binding site" evidence="1">
    <location>
        <position position="57"/>
    </location>
    <ligand>
        <name>Mg(2+)</name>
        <dbReference type="ChEBI" id="CHEBI:18420"/>
    </ligand>
</feature>
<dbReference type="EC" id="2.7.8.7" evidence="1"/>
<dbReference type="EMBL" id="CP000473">
    <property type="protein sequence ID" value="ABJ87633.1"/>
    <property type="molecule type" value="Genomic_DNA"/>
</dbReference>
<dbReference type="SMR" id="Q01RT7"/>
<dbReference type="FunCoup" id="Q01RT7">
    <property type="interactions" value="161"/>
</dbReference>
<dbReference type="STRING" id="234267.Acid_6712"/>
<dbReference type="KEGG" id="sus:Acid_6712"/>
<dbReference type="eggNOG" id="COG0736">
    <property type="taxonomic scope" value="Bacteria"/>
</dbReference>
<dbReference type="HOGENOM" id="CLU_089696_3_1_0"/>
<dbReference type="InParanoid" id="Q01RT7"/>
<dbReference type="OrthoDB" id="517356at2"/>
<dbReference type="GO" id="GO:0005737">
    <property type="term" value="C:cytoplasm"/>
    <property type="evidence" value="ECO:0007669"/>
    <property type="project" value="UniProtKB-SubCell"/>
</dbReference>
<dbReference type="GO" id="GO:0008897">
    <property type="term" value="F:holo-[acyl-carrier-protein] synthase activity"/>
    <property type="evidence" value="ECO:0007669"/>
    <property type="project" value="UniProtKB-UniRule"/>
</dbReference>
<dbReference type="GO" id="GO:0000287">
    <property type="term" value="F:magnesium ion binding"/>
    <property type="evidence" value="ECO:0007669"/>
    <property type="project" value="UniProtKB-UniRule"/>
</dbReference>
<dbReference type="GO" id="GO:0006633">
    <property type="term" value="P:fatty acid biosynthetic process"/>
    <property type="evidence" value="ECO:0007669"/>
    <property type="project" value="UniProtKB-UniRule"/>
</dbReference>
<dbReference type="Gene3D" id="3.90.470.20">
    <property type="entry name" value="4'-phosphopantetheinyl transferase domain"/>
    <property type="match status" value="1"/>
</dbReference>
<dbReference type="HAMAP" id="MF_00101">
    <property type="entry name" value="AcpS"/>
    <property type="match status" value="1"/>
</dbReference>
<dbReference type="InterPro" id="IPR008278">
    <property type="entry name" value="4-PPantetheinyl_Trfase_dom"/>
</dbReference>
<dbReference type="InterPro" id="IPR037143">
    <property type="entry name" value="4-PPantetheinyl_Trfase_dom_sf"/>
</dbReference>
<dbReference type="InterPro" id="IPR002582">
    <property type="entry name" value="ACPS"/>
</dbReference>
<dbReference type="InterPro" id="IPR004568">
    <property type="entry name" value="Ppantetheine-prot_Trfase_dom"/>
</dbReference>
<dbReference type="NCBIfam" id="TIGR00516">
    <property type="entry name" value="acpS"/>
    <property type="match status" value="1"/>
</dbReference>
<dbReference type="NCBIfam" id="TIGR00556">
    <property type="entry name" value="pantethn_trn"/>
    <property type="match status" value="1"/>
</dbReference>
<dbReference type="NCBIfam" id="NF011254">
    <property type="entry name" value="PRK14660.1"/>
    <property type="match status" value="1"/>
</dbReference>
<dbReference type="Pfam" id="PF01648">
    <property type="entry name" value="ACPS"/>
    <property type="match status" value="1"/>
</dbReference>
<dbReference type="SUPFAM" id="SSF56214">
    <property type="entry name" value="4'-phosphopantetheinyl transferase"/>
    <property type="match status" value="1"/>
</dbReference>
<comment type="function">
    <text evidence="1">Transfers the 4'-phosphopantetheine moiety from coenzyme A to a Ser of acyl-carrier-protein.</text>
</comment>
<comment type="catalytic activity">
    <reaction evidence="1">
        <text>apo-[ACP] + CoA = holo-[ACP] + adenosine 3',5'-bisphosphate + H(+)</text>
        <dbReference type="Rhea" id="RHEA:12068"/>
        <dbReference type="Rhea" id="RHEA-COMP:9685"/>
        <dbReference type="Rhea" id="RHEA-COMP:9690"/>
        <dbReference type="ChEBI" id="CHEBI:15378"/>
        <dbReference type="ChEBI" id="CHEBI:29999"/>
        <dbReference type="ChEBI" id="CHEBI:57287"/>
        <dbReference type="ChEBI" id="CHEBI:58343"/>
        <dbReference type="ChEBI" id="CHEBI:64479"/>
        <dbReference type="EC" id="2.7.8.7"/>
    </reaction>
</comment>
<comment type="cofactor">
    <cofactor evidence="1">
        <name>Mg(2+)</name>
        <dbReference type="ChEBI" id="CHEBI:18420"/>
    </cofactor>
</comment>
<comment type="subcellular location">
    <subcellularLocation>
        <location evidence="1">Cytoplasm</location>
    </subcellularLocation>
</comment>
<comment type="similarity">
    <text evidence="1">Belongs to the P-Pant transferase superfamily. AcpS family.</text>
</comment>